<organism>
    <name type="scientific">Homo sapiens</name>
    <name type="common">Human</name>
    <dbReference type="NCBI Taxonomy" id="9606"/>
    <lineage>
        <taxon>Eukaryota</taxon>
        <taxon>Metazoa</taxon>
        <taxon>Chordata</taxon>
        <taxon>Craniata</taxon>
        <taxon>Vertebrata</taxon>
        <taxon>Euteleostomi</taxon>
        <taxon>Mammalia</taxon>
        <taxon>Eutheria</taxon>
        <taxon>Euarchontoglires</taxon>
        <taxon>Primates</taxon>
        <taxon>Haplorrhini</taxon>
        <taxon>Catarrhini</taxon>
        <taxon>Hominidae</taxon>
        <taxon>Homo</taxon>
    </lineage>
</organism>
<sequence length="217" mass="22848">MASTGLELLGMTLAVLGWLGTLVSCALPLWKVTAFIGNSIVVAQVVWEGLWMSCVVQSTGQMQCKVYDSLLALPQDLQAARALCVIALLLALLGLLVAITGAQCTTCVEDEGAKARIVLTAGVILLLAGILVLIPVCWTAHAIIQDFYNPLVAEALKRELGASLYLGWAAAALLMLGGGLLCCTCPPPQVERPRGPRLGYSIPSRSGASGLDKRDYV</sequence>
<feature type="chain" id="PRO_0000144755" description="Claudin-9">
    <location>
        <begin position="1"/>
        <end position="217"/>
    </location>
</feature>
<feature type="topological domain" description="Cytoplasmic" evidence="2">
    <location>
        <begin position="1"/>
        <end position="7"/>
    </location>
</feature>
<feature type="transmembrane region" description="Helical" evidence="2">
    <location>
        <begin position="8"/>
        <end position="28"/>
    </location>
</feature>
<feature type="topological domain" description="Extracellular" evidence="2">
    <location>
        <begin position="29"/>
        <end position="81"/>
    </location>
</feature>
<feature type="transmembrane region" description="Helical" evidence="2">
    <location>
        <begin position="82"/>
        <end position="102"/>
    </location>
</feature>
<feature type="topological domain" description="Cytoplasmic" evidence="2">
    <location>
        <begin position="103"/>
        <end position="116"/>
    </location>
</feature>
<feature type="transmembrane region" description="Helical" evidence="2">
    <location>
        <begin position="117"/>
        <end position="137"/>
    </location>
</feature>
<feature type="topological domain" description="Extracellular" evidence="2">
    <location>
        <begin position="138"/>
        <end position="159"/>
    </location>
</feature>
<feature type="transmembrane region" description="Helical" evidence="2">
    <location>
        <begin position="160"/>
        <end position="180"/>
    </location>
</feature>
<feature type="topological domain" description="Cytoplasmic" evidence="2">
    <location>
        <begin position="181"/>
        <end position="217"/>
    </location>
</feature>
<feature type="region of interest" description="Disordered" evidence="3">
    <location>
        <begin position="194"/>
        <end position="217"/>
    </location>
</feature>
<feature type="mutagenesis site" description="Mildly decrease HCV infection susceptibility in cell culture." evidence="4">
    <original>N</original>
    <variation>S</variation>
    <location>
        <position position="38"/>
    </location>
</feature>
<feature type="mutagenesis site" description="No effect on HCV infection susceptibility in cell culture." evidence="4">
    <original>A</original>
    <variation>S</variation>
    <location>
        <position position="43"/>
    </location>
</feature>
<feature type="mutagenesis site" description="Abolishes HCV infection susceptibility in cell culture." evidence="4">
    <original>V</original>
    <variation>N</variation>
    <location>
        <position position="45"/>
    </location>
</feature>
<feature type="mutagenesis site" description="No effect on HCV infection susceptibility in cell culture." evidence="4">
    <original>S</original>
    <variation>N</variation>
    <location>
        <position position="53"/>
    </location>
</feature>
<feature type="helix" evidence="8">
    <location>
        <begin position="6"/>
        <end position="25"/>
    </location>
</feature>
<feature type="strand" evidence="9">
    <location>
        <begin position="26"/>
        <end position="28"/>
    </location>
</feature>
<feature type="strand" evidence="8">
    <location>
        <begin position="30"/>
        <end position="35"/>
    </location>
</feature>
<feature type="strand" evidence="9">
    <location>
        <begin position="37"/>
        <end position="39"/>
    </location>
</feature>
<feature type="strand" evidence="8">
    <location>
        <begin position="44"/>
        <end position="48"/>
    </location>
</feature>
<feature type="strand" evidence="8">
    <location>
        <begin position="50"/>
        <end position="60"/>
    </location>
</feature>
<feature type="strand" evidence="8">
    <location>
        <begin position="63"/>
        <end position="67"/>
    </location>
</feature>
<feature type="strand" evidence="9">
    <location>
        <begin position="69"/>
        <end position="71"/>
    </location>
</feature>
<feature type="helix" evidence="8">
    <location>
        <begin position="75"/>
        <end position="98"/>
    </location>
</feature>
<feature type="strand" evidence="9">
    <location>
        <begin position="103"/>
        <end position="106"/>
    </location>
</feature>
<feature type="helix" evidence="8">
    <location>
        <begin position="111"/>
        <end position="144"/>
    </location>
</feature>
<feature type="helix" evidence="8">
    <location>
        <begin position="145"/>
        <end position="148"/>
    </location>
</feature>
<feature type="strand" evidence="9">
    <location>
        <begin position="156"/>
        <end position="160"/>
    </location>
</feature>
<feature type="helix" evidence="8">
    <location>
        <begin position="162"/>
        <end position="182"/>
    </location>
</feature>
<name>CLD9_HUMAN</name>
<gene>
    <name type="primary">CLDN9</name>
</gene>
<evidence type="ECO:0000250" key="1">
    <source>
        <dbReference type="UniProtKB" id="O95832"/>
    </source>
</evidence>
<evidence type="ECO:0000255" key="2"/>
<evidence type="ECO:0000256" key="3">
    <source>
        <dbReference type="SAM" id="MobiDB-lite"/>
    </source>
</evidence>
<evidence type="ECO:0000269" key="4">
    <source>
    </source>
</evidence>
<evidence type="ECO:0000269" key="5">
    <source>
    </source>
</evidence>
<evidence type="ECO:0000269" key="6">
    <source>
    </source>
</evidence>
<evidence type="ECO:0000305" key="7"/>
<evidence type="ECO:0007829" key="8">
    <source>
        <dbReference type="PDB" id="6OV2"/>
    </source>
</evidence>
<evidence type="ECO:0007829" key="9">
    <source>
        <dbReference type="PDB" id="6OV3"/>
    </source>
</evidence>
<proteinExistence type="evidence at protein level"/>
<keyword id="KW-0002">3D-structure</keyword>
<keyword id="KW-0965">Cell junction</keyword>
<keyword id="KW-1003">Cell membrane</keyword>
<keyword id="KW-0209">Deafness</keyword>
<keyword id="KW-1183">Host cell receptor for virus entry</keyword>
<keyword id="KW-0945">Host-virus interaction</keyword>
<keyword id="KW-0472">Membrane</keyword>
<keyword id="KW-1010">Non-syndromic deafness</keyword>
<keyword id="KW-1267">Proteomics identification</keyword>
<keyword id="KW-0675">Receptor</keyword>
<keyword id="KW-1185">Reference proteome</keyword>
<keyword id="KW-0796">Tight junction</keyword>
<keyword id="KW-0812">Transmembrane</keyword>
<keyword id="KW-1133">Transmembrane helix</keyword>
<reference key="1">
    <citation type="submission" date="1998-11" db="EMBL/GenBank/DDBJ databases">
        <authorList>
            <person name="Keen T.J."/>
            <person name="Inglehearn C.F."/>
        </authorList>
    </citation>
    <scope>NUCLEOTIDE SEQUENCE [GENOMIC DNA]</scope>
</reference>
<reference key="2">
    <citation type="journal article" date="2004" name="Genome Res.">
        <title>The status, quality, and expansion of the NIH full-length cDNA project: the Mammalian Gene Collection (MGC).</title>
        <authorList>
            <consortium name="The MGC Project Team"/>
        </authorList>
    </citation>
    <scope>NUCLEOTIDE SEQUENCE [LARGE SCALE MRNA]</scope>
    <source>
        <tissue>Eye</tissue>
        <tissue>Pituitary</tissue>
    </source>
</reference>
<reference key="3">
    <citation type="journal article" date="2007" name="J. Virol.">
        <title>Claudin-6 and claudin-9 function as additional coreceptors for hepatitis C virus.</title>
        <authorList>
            <person name="Zheng A."/>
            <person name="Yuan F."/>
            <person name="Li Y."/>
            <person name="Zhu F."/>
            <person name="Hou P."/>
            <person name="Li J."/>
            <person name="Song X."/>
            <person name="Ding M."/>
            <person name="Deng H."/>
        </authorList>
    </citation>
    <scope>TISSUE SPECIFICITY</scope>
    <scope>FUNCTION (MICROBIAL INFECTION)</scope>
    <scope>MUTAGENESIS OF ASN-38; ALA-43; VAL-45 AND SER-53</scope>
</reference>
<reference key="4">
    <citation type="journal article" date="2010" name="J. Biol. Chem.">
        <title>Claudin association with CD81 defines hepatitis C virus entry.</title>
        <authorList>
            <person name="Harris H.J."/>
            <person name="Davis C."/>
            <person name="Mullins J.G."/>
            <person name="Hu K."/>
            <person name="Goodall M."/>
            <person name="Farquhar M.J."/>
            <person name="Mee C.J."/>
            <person name="McCaffrey K."/>
            <person name="Young S."/>
            <person name="Drummer H."/>
            <person name="Balfe P."/>
            <person name="McKeating J.A."/>
        </authorList>
    </citation>
    <scope>FUNCTION (MICROBIAL INFECTION)</scope>
    <scope>SUBCELLULAR LOCATION</scope>
    <scope>INTERACTION WITH CLDN1; CD81 AND OCLN</scope>
</reference>
<reference key="5">
    <citation type="journal article" date="2019" name="Hum. Genet.">
        <title>A truncating CLDN9 variant is associated with autosomal recessive nonsyndromic hearing loss.</title>
        <authorList>
            <person name="Sineni C.J."/>
            <person name="Yildirim-Baylan M."/>
            <person name="Guo S."/>
            <person name="Camarena V."/>
            <person name="Wang G."/>
            <person name="Tokgoz-Yilmaz S."/>
            <person name="Duman D."/>
            <person name="Bademci G."/>
            <person name="Tekin M."/>
        </authorList>
    </citation>
    <scope>INVOLVEMENT IN DFNB116</scope>
    <scope>SUBCELLULAR LOCATION</scope>
</reference>
<accession>O95484</accession>
<dbReference type="EMBL" id="AJ130941">
    <property type="protein sequence ID" value="CAA10254.1"/>
    <property type="molecule type" value="Genomic_DNA"/>
</dbReference>
<dbReference type="EMBL" id="BC051870">
    <property type="protein sequence ID" value="AAH51870.1"/>
    <property type="molecule type" value="mRNA"/>
</dbReference>
<dbReference type="EMBL" id="BC065830">
    <property type="protein sequence ID" value="AAH65830.1"/>
    <property type="molecule type" value="mRNA"/>
</dbReference>
<dbReference type="CCDS" id="CCDS10487.1"/>
<dbReference type="RefSeq" id="NP_066192.1">
    <property type="nucleotide sequence ID" value="NM_020982.4"/>
</dbReference>
<dbReference type="PDB" id="6OV2">
    <property type="method" value="X-ray"/>
    <property type="resolution" value="3.20 A"/>
    <property type="chains" value="A=1-217"/>
</dbReference>
<dbReference type="PDB" id="6OV3">
    <property type="method" value="X-ray"/>
    <property type="resolution" value="3.25 A"/>
    <property type="chains" value="A=1-217"/>
</dbReference>
<dbReference type="PDBsum" id="6OV2"/>
<dbReference type="PDBsum" id="6OV3"/>
<dbReference type="SMR" id="O95484"/>
<dbReference type="BioGRID" id="114536">
    <property type="interactions" value="17"/>
</dbReference>
<dbReference type="FunCoup" id="O95484">
    <property type="interactions" value="361"/>
</dbReference>
<dbReference type="IntAct" id="O95484">
    <property type="interactions" value="19"/>
</dbReference>
<dbReference type="STRING" id="9606.ENSP00000398017"/>
<dbReference type="TCDB" id="1.H.1.1.19">
    <property type="family name" value="the claudin tight junction (claudin1) family"/>
</dbReference>
<dbReference type="GlyGen" id="O95484">
    <property type="glycosylation" value="1 site, 1 O-linked glycan (1 site)"/>
</dbReference>
<dbReference type="iPTMnet" id="O95484"/>
<dbReference type="PhosphoSitePlus" id="O95484"/>
<dbReference type="BioMuta" id="CLDN9"/>
<dbReference type="jPOST" id="O95484"/>
<dbReference type="MassIVE" id="O95484"/>
<dbReference type="PaxDb" id="9606-ENSP00000398017"/>
<dbReference type="PeptideAtlas" id="O95484"/>
<dbReference type="ProteomicsDB" id="50911"/>
<dbReference type="Pumba" id="O95484"/>
<dbReference type="ABCD" id="O95484">
    <property type="antibodies" value="3 sequenced antibodies"/>
</dbReference>
<dbReference type="Antibodypedia" id="10653">
    <property type="antibodies" value="91 antibodies from 28 providers"/>
</dbReference>
<dbReference type="DNASU" id="9080"/>
<dbReference type="Ensembl" id="ENST00000445369.3">
    <property type="protein sequence ID" value="ENSP00000398017.2"/>
    <property type="gene ID" value="ENSG00000213937.4"/>
</dbReference>
<dbReference type="GeneID" id="9080"/>
<dbReference type="KEGG" id="hsa:9080"/>
<dbReference type="MANE-Select" id="ENST00000445369.3">
    <property type="protein sequence ID" value="ENSP00000398017.2"/>
    <property type="RefSeq nucleotide sequence ID" value="NM_020982.4"/>
    <property type="RefSeq protein sequence ID" value="NP_066192.1"/>
</dbReference>
<dbReference type="UCSC" id="uc010uwo.1">
    <property type="organism name" value="human"/>
</dbReference>
<dbReference type="AGR" id="HGNC:2051"/>
<dbReference type="CTD" id="9080"/>
<dbReference type="DisGeNET" id="9080"/>
<dbReference type="GeneCards" id="CLDN9"/>
<dbReference type="HGNC" id="HGNC:2051">
    <property type="gene designation" value="CLDN9"/>
</dbReference>
<dbReference type="HPA" id="ENSG00000213937">
    <property type="expression patterns" value="Group enriched (brain, pituitary gland)"/>
</dbReference>
<dbReference type="MalaCards" id="CLDN9"/>
<dbReference type="MIM" id="615799">
    <property type="type" value="gene"/>
</dbReference>
<dbReference type="MIM" id="619093">
    <property type="type" value="phenotype"/>
</dbReference>
<dbReference type="neXtProt" id="NX_O95484"/>
<dbReference type="OpenTargets" id="ENSG00000213937"/>
<dbReference type="PharmGKB" id="PA26577"/>
<dbReference type="VEuPathDB" id="HostDB:ENSG00000213937"/>
<dbReference type="eggNOG" id="ENOG502QRZ8">
    <property type="taxonomic scope" value="Eukaryota"/>
</dbReference>
<dbReference type="GeneTree" id="ENSGT00940000162145"/>
<dbReference type="HOGENOM" id="CLU_076370_1_2_1"/>
<dbReference type="InParanoid" id="O95484"/>
<dbReference type="OMA" id="DRYNGAK"/>
<dbReference type="OrthoDB" id="8830244at2759"/>
<dbReference type="PAN-GO" id="O95484">
    <property type="GO annotations" value="4 GO annotations based on evolutionary models"/>
</dbReference>
<dbReference type="PhylomeDB" id="O95484"/>
<dbReference type="TreeFam" id="TF331936"/>
<dbReference type="PathwayCommons" id="O95484"/>
<dbReference type="Reactome" id="R-HSA-420029">
    <property type="pathway name" value="Tight junction interactions"/>
</dbReference>
<dbReference type="SignaLink" id="O95484"/>
<dbReference type="BioGRID-ORCS" id="9080">
    <property type="hits" value="28 hits in 1142 CRISPR screens"/>
</dbReference>
<dbReference type="GeneWiki" id="CLDN9"/>
<dbReference type="GenomeRNAi" id="9080"/>
<dbReference type="Pharos" id="O95484">
    <property type="development level" value="Tbio"/>
</dbReference>
<dbReference type="PRO" id="PR:O95484"/>
<dbReference type="Proteomes" id="UP000005640">
    <property type="component" value="Chromosome 16"/>
</dbReference>
<dbReference type="RNAct" id="O95484">
    <property type="molecule type" value="protein"/>
</dbReference>
<dbReference type="Bgee" id="ENSG00000213937">
    <property type="expression patterns" value="Expressed in right hemisphere of cerebellum and 93 other cell types or tissues"/>
</dbReference>
<dbReference type="GO" id="GO:0005923">
    <property type="term" value="C:bicellular tight junction"/>
    <property type="evidence" value="ECO:0000250"/>
    <property type="project" value="UniProtKB"/>
</dbReference>
<dbReference type="GO" id="GO:0030054">
    <property type="term" value="C:cell junction"/>
    <property type="evidence" value="ECO:0000314"/>
    <property type="project" value="HPA"/>
</dbReference>
<dbReference type="GO" id="GO:0043231">
    <property type="term" value="C:intracellular membrane-bounded organelle"/>
    <property type="evidence" value="ECO:0000314"/>
    <property type="project" value="HPA"/>
</dbReference>
<dbReference type="GO" id="GO:0005886">
    <property type="term" value="C:plasma membrane"/>
    <property type="evidence" value="ECO:0000314"/>
    <property type="project" value="UniProtKB"/>
</dbReference>
<dbReference type="GO" id="GO:0042802">
    <property type="term" value="F:identical protein binding"/>
    <property type="evidence" value="ECO:0000250"/>
    <property type="project" value="UniProtKB"/>
</dbReference>
<dbReference type="GO" id="GO:0005198">
    <property type="term" value="F:structural molecule activity"/>
    <property type="evidence" value="ECO:0007669"/>
    <property type="project" value="InterPro"/>
</dbReference>
<dbReference type="GO" id="GO:0001618">
    <property type="term" value="F:virus receptor activity"/>
    <property type="evidence" value="ECO:0000315"/>
    <property type="project" value="UniProtKB"/>
</dbReference>
<dbReference type="GO" id="GO:0070830">
    <property type="term" value="P:bicellular tight junction assembly"/>
    <property type="evidence" value="ECO:0000318"/>
    <property type="project" value="GO_Central"/>
</dbReference>
<dbReference type="GO" id="GO:0016338">
    <property type="term" value="P:calcium-independent cell-cell adhesion via plasma membrane cell-adhesion molecules"/>
    <property type="evidence" value="ECO:0000250"/>
    <property type="project" value="UniProtKB"/>
</dbReference>
<dbReference type="GO" id="GO:0007155">
    <property type="term" value="P:cell adhesion"/>
    <property type="evidence" value="ECO:0000318"/>
    <property type="project" value="GO_Central"/>
</dbReference>
<dbReference type="FunFam" id="1.20.140.150:FF:000001">
    <property type="entry name" value="Claudin"/>
    <property type="match status" value="1"/>
</dbReference>
<dbReference type="Gene3D" id="1.20.140.150">
    <property type="match status" value="1"/>
</dbReference>
<dbReference type="InterPro" id="IPR006187">
    <property type="entry name" value="Claudin"/>
</dbReference>
<dbReference type="InterPro" id="IPR003553">
    <property type="entry name" value="Claudin9"/>
</dbReference>
<dbReference type="InterPro" id="IPR017974">
    <property type="entry name" value="Claudin_CS"/>
</dbReference>
<dbReference type="InterPro" id="IPR004031">
    <property type="entry name" value="PMP22/EMP/MP20/Claudin"/>
</dbReference>
<dbReference type="PANTHER" id="PTHR12002">
    <property type="entry name" value="CLAUDIN"/>
    <property type="match status" value="1"/>
</dbReference>
<dbReference type="Pfam" id="PF00822">
    <property type="entry name" value="PMP22_Claudin"/>
    <property type="match status" value="1"/>
</dbReference>
<dbReference type="PRINTS" id="PR01077">
    <property type="entry name" value="CLAUDIN"/>
</dbReference>
<dbReference type="PRINTS" id="PR01382">
    <property type="entry name" value="CLAUDIN9"/>
</dbReference>
<dbReference type="PROSITE" id="PS01346">
    <property type="entry name" value="CLAUDIN"/>
    <property type="match status" value="1"/>
</dbReference>
<comment type="function">
    <text evidence="1">Plays a major role in tight junction-specific obliteration of the intercellular space, through calcium-independent cell-adhesion activity.</text>
</comment>
<comment type="function">
    <text evidence="4 5">(Microbial infection) Acts as a receptor for hepatitis C virus (HCV) entry into hepatic cells.</text>
</comment>
<comment type="subunit">
    <text evidence="5">Interacts with CLDN1, CD81 and OCLN (PubMed:20375010).</text>
</comment>
<comment type="interaction">
    <interactant intactId="EBI-18341636">
        <id>O95484</id>
    </interactant>
    <interactant intactId="EBI-10827839">
        <id>Q15848</id>
        <label>ADIPOQ</label>
    </interactant>
    <organismsDiffer>false</organismsDiffer>
    <experiments>3</experiments>
</comment>
<comment type="interaction">
    <interactant intactId="EBI-18341636">
        <id>O95484</id>
    </interactant>
    <interactant intactId="EBI-19125216">
        <id>Q86WK6</id>
        <label>AMIGO1</label>
    </interactant>
    <organismsDiffer>false</organismsDiffer>
    <experiments>3</experiments>
</comment>
<comment type="interaction">
    <interactant intactId="EBI-18341636">
        <id>O95484</id>
    </interactant>
    <interactant intactId="EBI-3921628">
        <id>Q16853</id>
        <label>AOC3</label>
    </interactant>
    <organismsDiffer>false</organismsDiffer>
    <experiments>3</experiments>
</comment>
<comment type="interaction">
    <interactant intactId="EBI-18341636">
        <id>O95484</id>
    </interactant>
    <interactant intactId="EBI-749464">
        <id>Q12983</id>
        <label>BNIP3</label>
    </interactant>
    <organismsDiffer>false</organismsDiffer>
    <experiments>3</experiments>
</comment>
<comment type="interaction">
    <interactant intactId="EBI-18341636">
        <id>O95484</id>
    </interactant>
    <interactant intactId="EBI-12003442">
        <id>Q8WVX3-2</id>
        <label>C4orf3</label>
    </interactant>
    <organismsDiffer>false</organismsDiffer>
    <experiments>3</experiments>
</comment>
<comment type="interaction">
    <interactant intactId="EBI-18341636">
        <id>O95484</id>
    </interactant>
    <interactant intactId="EBI-8646596">
        <id>P49447</id>
        <label>CYB561</label>
    </interactant>
    <organismsDiffer>false</organismsDiffer>
    <experiments>3</experiments>
</comment>
<comment type="interaction">
    <interactant intactId="EBI-18341636">
        <id>O95484</id>
    </interactant>
    <interactant intactId="EBI-4319440">
        <id>P54849</id>
        <label>EMP1</label>
    </interactant>
    <organismsDiffer>false</organismsDiffer>
    <experiments>3</experiments>
</comment>
<comment type="interaction">
    <interactant intactId="EBI-18341636">
        <id>O95484</id>
    </interactant>
    <interactant intactId="EBI-10976398">
        <id>Q7Z2K6</id>
        <label>ERMP1</label>
    </interactant>
    <organismsDiffer>false</organismsDiffer>
    <experiments>3</experiments>
</comment>
<comment type="interaction">
    <interactant intactId="EBI-18341636">
        <id>O95484</id>
    </interactant>
    <interactant intactId="EBI-1760167">
        <id>Q92935</id>
        <label>EXTL1</label>
    </interactant>
    <organismsDiffer>false</organismsDiffer>
    <experiments>3</experiments>
</comment>
<comment type="interaction">
    <interactant intactId="EBI-18341636">
        <id>O95484</id>
    </interactant>
    <interactant intactId="EBI-10232876">
        <id>Q14416</id>
        <label>GRM2</label>
    </interactant>
    <organismsDiffer>false</organismsDiffer>
    <experiments>3</experiments>
</comment>
<comment type="interaction">
    <interactant intactId="EBI-18341636">
        <id>O95484</id>
    </interactant>
    <interactant intactId="EBI-720480">
        <id>P24593</id>
        <label>IGFBP5</label>
    </interactant>
    <organismsDiffer>false</organismsDiffer>
    <experiments>3</experiments>
</comment>
<comment type="interaction">
    <interactant intactId="EBI-18341636">
        <id>O95484</id>
    </interactant>
    <interactant intactId="EBI-12033434">
        <id>Q9UBY5</id>
        <label>LPAR3</label>
    </interactant>
    <organismsDiffer>false</organismsDiffer>
    <experiments>3</experiments>
</comment>
<comment type="interaction">
    <interactant intactId="EBI-18341636">
        <id>O95484</id>
    </interactant>
    <interactant intactId="EBI-3932027">
        <id>P21145</id>
        <label>MAL</label>
    </interactant>
    <organismsDiffer>false</organismsDiffer>
    <experiments>3</experiments>
</comment>
<comment type="interaction">
    <interactant intactId="EBI-18341636">
        <id>O95484</id>
    </interactant>
    <interactant intactId="EBI-750078">
        <id>Q13021</id>
        <label>MALL</label>
    </interactant>
    <organismsDiffer>false</organismsDiffer>
    <experiments>3</experiments>
</comment>
<comment type="interaction">
    <interactant intactId="EBI-18341636">
        <id>O95484</id>
    </interactant>
    <interactant intactId="EBI-11721828">
        <id>Q8IY26</id>
        <label>PLPP6</label>
    </interactant>
    <organismsDiffer>false</organismsDiffer>
    <experiments>3</experiments>
</comment>
<comment type="interaction">
    <interactant intactId="EBI-18341636">
        <id>O95484</id>
    </interactant>
    <interactant intactId="EBI-12955265">
        <id>Q96GM1</id>
        <label>PLPPR2</label>
    </interactant>
    <organismsDiffer>false</organismsDiffer>
    <experiments>3</experiments>
</comment>
<comment type="interaction">
    <interactant intactId="EBI-18341636">
        <id>O95484</id>
    </interactant>
    <interactant intactId="EBI-1052363">
        <id>Q9NS64</id>
        <label>RPRM</label>
    </interactant>
    <organismsDiffer>false</organismsDiffer>
    <experiments>3</experiments>
</comment>
<comment type="interaction">
    <interactant intactId="EBI-18341636">
        <id>O95484</id>
    </interactant>
    <interactant intactId="EBI-727240">
        <id>Q9UNK0</id>
        <label>STX8</label>
    </interactant>
    <organismsDiffer>false</organismsDiffer>
    <experiments>3</experiments>
</comment>
<comment type="interaction">
    <interactant intactId="EBI-18341636">
        <id>O95484</id>
    </interactant>
    <interactant intactId="EBI-12190699">
        <id>Q6UX27-3</id>
        <label>VSTM1</label>
    </interactant>
    <organismsDiffer>false</organismsDiffer>
    <experiments>3</experiments>
</comment>
<comment type="subcellular location">
    <subcellularLocation>
        <location>Cell junction</location>
        <location>Tight junction</location>
    </subcellularLocation>
    <subcellularLocation>
        <location evidence="5 6">Cell membrane</location>
        <topology evidence="2">Multi-pass membrane protein</topology>
    </subcellularLocation>
</comment>
<comment type="tissue specificity">
    <text evidence="4">Expressed in the liver, in peripheral blood mononuclear cells and hepatocarcinoma cell lines.</text>
</comment>
<comment type="disease" evidence="6">
    <disease id="DI-05964">
        <name>Deafness, autosomal recessive, 116</name>
        <acronym>DFNB116</acronym>
        <description>A form of non-syndromic deafness characterized by slowly progressive, moderate to profound sensorineural hearing loss. Sensorineural deafness results from damage to the neural receptors of the inner ear, the nerve pathways to the brain, or the area of the brain that receives sound information.</description>
        <dbReference type="MIM" id="619093"/>
    </disease>
    <text>The disease is caused by variants affecting the gene represented in this entry.</text>
</comment>
<comment type="similarity">
    <text evidence="7">Belongs to the claudin family.</text>
</comment>
<comment type="online information" name="Atlas of Genetics and Cytogenetics in Oncology and Haematology">
    <link uri="https://atlasgeneticsoncology.org/gene/51555/CLDN9"/>
</comment>
<protein>
    <recommendedName>
        <fullName>Claudin-9</fullName>
    </recommendedName>
</protein>